<evidence type="ECO:0000250" key="1"/>
<evidence type="ECO:0000255" key="2"/>
<evidence type="ECO:0000269" key="3">
    <source>
    </source>
</evidence>
<evidence type="ECO:0000269" key="4">
    <source>
    </source>
</evidence>
<evidence type="ECO:0000305" key="5"/>
<accession>P82735</accession>
<name>DF156_ARATH</name>
<keyword id="KW-0929">Antimicrobial</keyword>
<keyword id="KW-1015">Disulfide bond</keyword>
<keyword id="KW-0295">Fungicide</keyword>
<keyword id="KW-0611">Plant defense</keyword>
<keyword id="KW-1185">Reference proteome</keyword>
<keyword id="KW-0964">Secreted</keyword>
<keyword id="KW-0732">Signal</keyword>
<proteinExistence type="evidence at transcript level"/>
<organism evidence="5">
    <name type="scientific">Arabidopsis thaliana</name>
    <name type="common">Mouse-ear cress</name>
    <dbReference type="NCBI Taxonomy" id="3702"/>
    <lineage>
        <taxon>Eukaryota</taxon>
        <taxon>Viridiplantae</taxon>
        <taxon>Streptophyta</taxon>
        <taxon>Embryophyta</taxon>
        <taxon>Tracheophyta</taxon>
        <taxon>Spermatophyta</taxon>
        <taxon>Magnoliopsida</taxon>
        <taxon>eudicotyledons</taxon>
        <taxon>Gunneridae</taxon>
        <taxon>Pentapetalae</taxon>
        <taxon>rosids</taxon>
        <taxon>malvids</taxon>
        <taxon>Brassicales</taxon>
        <taxon>Brassicaceae</taxon>
        <taxon>Camelineae</taxon>
        <taxon>Arabidopsis</taxon>
    </lineage>
</organism>
<feature type="signal peptide" evidence="2">
    <location>
        <begin position="1"/>
        <end position="27"/>
    </location>
</feature>
<feature type="chain" id="PRO_0000017262" description="Defensin-like protein 156">
    <location>
        <begin position="28"/>
        <end position="82"/>
    </location>
</feature>
<feature type="disulfide bond" evidence="1">
    <location>
        <begin position="31"/>
        <end position="77"/>
    </location>
</feature>
<feature type="disulfide bond" evidence="1">
    <location>
        <begin position="41"/>
        <end position="60"/>
    </location>
</feature>
<feature type="disulfide bond" evidence="1">
    <location>
        <begin position="46"/>
        <end position="71"/>
    </location>
</feature>
<feature type="disulfide bond" evidence="1">
    <location>
        <begin position="50"/>
        <end position="73"/>
    </location>
</feature>
<reference evidence="5" key="1">
    <citation type="journal article" date="1999" name="Nature">
        <title>Sequence and analysis of chromosome 4 of the plant Arabidopsis thaliana.</title>
        <authorList>
            <person name="Mayer K.F.X."/>
            <person name="Schueller C."/>
            <person name="Wambutt R."/>
            <person name="Murphy G."/>
            <person name="Volckaert G."/>
            <person name="Pohl T."/>
            <person name="Duesterhoeft A."/>
            <person name="Stiekema W."/>
            <person name="Entian K.-D."/>
            <person name="Terryn N."/>
            <person name="Harris B."/>
            <person name="Ansorge W."/>
            <person name="Brandt P."/>
            <person name="Grivell L.A."/>
            <person name="Rieger M."/>
            <person name="Weichselgartner M."/>
            <person name="de Simone V."/>
            <person name="Obermaier B."/>
            <person name="Mache R."/>
            <person name="Mueller M."/>
            <person name="Kreis M."/>
            <person name="Delseny M."/>
            <person name="Puigdomenech P."/>
            <person name="Watson M."/>
            <person name="Schmidtheini T."/>
            <person name="Reichert B."/>
            <person name="Portetelle D."/>
            <person name="Perez-Alonso M."/>
            <person name="Boutry M."/>
            <person name="Bancroft I."/>
            <person name="Vos P."/>
            <person name="Hoheisel J."/>
            <person name="Zimmermann W."/>
            <person name="Wedler H."/>
            <person name="Ridley P."/>
            <person name="Langham S.-A."/>
            <person name="McCullagh B."/>
            <person name="Bilham L."/>
            <person name="Robben J."/>
            <person name="van der Schueren J."/>
            <person name="Grymonprez B."/>
            <person name="Chuang Y.-J."/>
            <person name="Vandenbussche F."/>
            <person name="Braeken M."/>
            <person name="Weltjens I."/>
            <person name="Voet M."/>
            <person name="Bastiaens I."/>
            <person name="Aert R."/>
            <person name="Defoor E."/>
            <person name="Weitzenegger T."/>
            <person name="Bothe G."/>
            <person name="Ramsperger U."/>
            <person name="Hilbert H."/>
            <person name="Braun M."/>
            <person name="Holzer E."/>
            <person name="Brandt A."/>
            <person name="Peters S."/>
            <person name="van Staveren M."/>
            <person name="Dirkse W."/>
            <person name="Mooijman P."/>
            <person name="Klein Lankhorst R."/>
            <person name="Rose M."/>
            <person name="Hauf J."/>
            <person name="Koetter P."/>
            <person name="Berneiser S."/>
            <person name="Hempel S."/>
            <person name="Feldpausch M."/>
            <person name="Lamberth S."/>
            <person name="Van den Daele H."/>
            <person name="De Keyser A."/>
            <person name="Buysshaert C."/>
            <person name="Gielen J."/>
            <person name="Villarroel R."/>
            <person name="De Clercq R."/>
            <person name="van Montagu M."/>
            <person name="Rogers J."/>
            <person name="Cronin A."/>
            <person name="Quail M.A."/>
            <person name="Bray-Allen S."/>
            <person name="Clark L."/>
            <person name="Doggett J."/>
            <person name="Hall S."/>
            <person name="Kay M."/>
            <person name="Lennard N."/>
            <person name="McLay K."/>
            <person name="Mayes R."/>
            <person name="Pettett A."/>
            <person name="Rajandream M.A."/>
            <person name="Lyne M."/>
            <person name="Benes V."/>
            <person name="Rechmann S."/>
            <person name="Borkova D."/>
            <person name="Bloecker H."/>
            <person name="Scharfe M."/>
            <person name="Grimm M."/>
            <person name="Loehnert T.-H."/>
            <person name="Dose S."/>
            <person name="de Haan M."/>
            <person name="Maarse A.C."/>
            <person name="Schaefer M."/>
            <person name="Mueller-Auer S."/>
            <person name="Gabel C."/>
            <person name="Fuchs M."/>
            <person name="Fartmann B."/>
            <person name="Granderath K."/>
            <person name="Dauner D."/>
            <person name="Herzl A."/>
            <person name="Neumann S."/>
            <person name="Argiriou A."/>
            <person name="Vitale D."/>
            <person name="Liguori R."/>
            <person name="Piravandi E."/>
            <person name="Massenet O."/>
            <person name="Quigley F."/>
            <person name="Clabauld G."/>
            <person name="Muendlein A."/>
            <person name="Felber R."/>
            <person name="Schnabl S."/>
            <person name="Hiller R."/>
            <person name="Schmidt W."/>
            <person name="Lecharny A."/>
            <person name="Aubourg S."/>
            <person name="Chefdor F."/>
            <person name="Cooke R."/>
            <person name="Berger C."/>
            <person name="Monfort A."/>
            <person name="Casacuberta E."/>
            <person name="Gibbons T."/>
            <person name="Weber N."/>
            <person name="Vandenbol M."/>
            <person name="Bargues M."/>
            <person name="Terol J."/>
            <person name="Torres A."/>
            <person name="Perez-Perez A."/>
            <person name="Purnelle B."/>
            <person name="Bent E."/>
            <person name="Johnson S."/>
            <person name="Tacon D."/>
            <person name="Jesse T."/>
            <person name="Heijnen L."/>
            <person name="Schwarz S."/>
            <person name="Scholler P."/>
            <person name="Heber S."/>
            <person name="Francs P."/>
            <person name="Bielke C."/>
            <person name="Frishman D."/>
            <person name="Haase D."/>
            <person name="Lemcke K."/>
            <person name="Mewes H.-W."/>
            <person name="Stocker S."/>
            <person name="Zaccaria P."/>
            <person name="Bevan M."/>
            <person name="Wilson R.K."/>
            <person name="de la Bastide M."/>
            <person name="Habermann K."/>
            <person name="Parnell L."/>
            <person name="Dedhia N."/>
            <person name="Gnoj L."/>
            <person name="Schutz K."/>
            <person name="Huang E."/>
            <person name="Spiegel L."/>
            <person name="Sekhon M."/>
            <person name="Murray J."/>
            <person name="Sheet P."/>
            <person name="Cordes M."/>
            <person name="Abu-Threideh J."/>
            <person name="Stoneking T."/>
            <person name="Kalicki J."/>
            <person name="Graves T."/>
            <person name="Harmon G."/>
            <person name="Edwards J."/>
            <person name="Latreille P."/>
            <person name="Courtney L."/>
            <person name="Cloud J."/>
            <person name="Abbott A."/>
            <person name="Scott K."/>
            <person name="Johnson D."/>
            <person name="Minx P."/>
            <person name="Bentley D."/>
            <person name="Fulton B."/>
            <person name="Miller N."/>
            <person name="Greco T."/>
            <person name="Kemp K."/>
            <person name="Kramer J."/>
            <person name="Fulton L."/>
            <person name="Mardis E."/>
            <person name="Dante M."/>
            <person name="Pepin K."/>
            <person name="Hillier L.W."/>
            <person name="Nelson J."/>
            <person name="Spieth J."/>
            <person name="Ryan E."/>
            <person name="Andrews S."/>
            <person name="Geisel C."/>
            <person name="Layman D."/>
            <person name="Du H."/>
            <person name="Ali J."/>
            <person name="Berghoff A."/>
            <person name="Jones K."/>
            <person name="Drone K."/>
            <person name="Cotton M."/>
            <person name="Joshu C."/>
            <person name="Antonoiu B."/>
            <person name="Zidanic M."/>
            <person name="Strong C."/>
            <person name="Sun H."/>
            <person name="Lamar B."/>
            <person name="Yordan C."/>
            <person name="Ma P."/>
            <person name="Zhong J."/>
            <person name="Preston R."/>
            <person name="Vil D."/>
            <person name="Shekher M."/>
            <person name="Matero A."/>
            <person name="Shah R."/>
            <person name="Swaby I.K."/>
            <person name="O'Shaughnessy A."/>
            <person name="Rodriguez M."/>
            <person name="Hoffman J."/>
            <person name="Till S."/>
            <person name="Granat S."/>
            <person name="Shohdy N."/>
            <person name="Hasegawa A."/>
            <person name="Hameed A."/>
            <person name="Lodhi M."/>
            <person name="Johnson A."/>
            <person name="Chen E."/>
            <person name="Marra M.A."/>
            <person name="Martienssen R."/>
            <person name="McCombie W.R."/>
        </authorList>
    </citation>
    <scope>NUCLEOTIDE SEQUENCE [LARGE SCALE GENOMIC DNA]</scope>
    <source>
        <strain evidence="3">cv. Columbia</strain>
    </source>
</reference>
<reference key="2">
    <citation type="journal article" date="2017" name="Plant J.">
        <title>Araport11: a complete reannotation of the Arabidopsis thaliana reference genome.</title>
        <authorList>
            <person name="Cheng C.Y."/>
            <person name="Krishnakumar V."/>
            <person name="Chan A.P."/>
            <person name="Thibaud-Nissen F."/>
            <person name="Schobel S."/>
            <person name="Town C.D."/>
        </authorList>
    </citation>
    <scope>GENOME REANNOTATION</scope>
    <source>
        <strain>cv. Columbia</strain>
    </source>
</reference>
<reference evidence="5" key="3">
    <citation type="journal article" date="2001" name="Plant Mol. Biol.">
        <title>Two large Arabidopsis thaliana gene families are homologous to the Brassica gene superfamily that encodes pollen coat proteins and the male component of the self-incompatibility response.</title>
        <authorList>
            <person name="Vanoosthuyse V."/>
            <person name="Miege C."/>
            <person name="Dumas C."/>
            <person name="Cock J.M."/>
        </authorList>
    </citation>
    <scope>IDENTIFICATION</scope>
    <scope>TISSUE SPECIFICITY</scope>
</reference>
<reference key="4">
    <citation type="journal article" date="2005" name="Plant Physiol.">
        <title>Genome organization of more than 300 defensin-like genes in Arabidopsis.</title>
        <authorList>
            <person name="Silverstein K.A.T."/>
            <person name="Graham M.A."/>
            <person name="Paape T.D."/>
            <person name="VandenBosch K.A."/>
        </authorList>
    </citation>
    <scope>GENE FAMILY</scope>
</reference>
<dbReference type="EMBL" id="AL096692">
    <property type="status" value="NOT_ANNOTATED_CDS"/>
    <property type="molecule type" value="Genomic_DNA"/>
</dbReference>
<dbReference type="EMBL" id="AL161574">
    <property type="status" value="NOT_ANNOTATED_CDS"/>
    <property type="molecule type" value="Genomic_DNA"/>
</dbReference>
<dbReference type="EMBL" id="CP002687">
    <property type="protein sequence ID" value="AEE85612.1"/>
    <property type="molecule type" value="Genomic_DNA"/>
</dbReference>
<dbReference type="RefSeq" id="NP_001031746.1">
    <property type="nucleotide sequence ID" value="NM_001036669.2"/>
</dbReference>
<dbReference type="PaxDb" id="3702-AT4G29283.1"/>
<dbReference type="EnsemblPlants" id="AT4G29283.1">
    <property type="protein sequence ID" value="AT4G29283.1"/>
    <property type="gene ID" value="AT4G29283"/>
</dbReference>
<dbReference type="GeneID" id="3770554"/>
<dbReference type="Gramene" id="AT4G29283.1">
    <property type="protein sequence ID" value="AT4G29283.1"/>
    <property type="gene ID" value="AT4G29283"/>
</dbReference>
<dbReference type="KEGG" id="ath:AT4G29283"/>
<dbReference type="Araport" id="AT4G29283"/>
<dbReference type="TAIR" id="AT4G29283">
    <property type="gene designation" value="LCR21"/>
</dbReference>
<dbReference type="HOGENOM" id="CLU_182511_1_0_1"/>
<dbReference type="InParanoid" id="P82735"/>
<dbReference type="OMA" id="RVECHIE"/>
<dbReference type="PhylomeDB" id="P82735"/>
<dbReference type="PRO" id="PR:P82735"/>
<dbReference type="Proteomes" id="UP000006548">
    <property type="component" value="Chromosome 4"/>
</dbReference>
<dbReference type="ExpressionAtlas" id="P82735">
    <property type="expression patterns" value="baseline"/>
</dbReference>
<dbReference type="GO" id="GO:0005576">
    <property type="term" value="C:extracellular region"/>
    <property type="evidence" value="ECO:0007669"/>
    <property type="project" value="UniProtKB-SubCell"/>
</dbReference>
<dbReference type="GO" id="GO:0050832">
    <property type="term" value="P:defense response to fungus"/>
    <property type="evidence" value="ECO:0007669"/>
    <property type="project" value="UniProtKB-KW"/>
</dbReference>
<dbReference type="GO" id="GO:0031640">
    <property type="term" value="P:killing of cells of another organism"/>
    <property type="evidence" value="ECO:0007669"/>
    <property type="project" value="UniProtKB-KW"/>
</dbReference>
<dbReference type="InterPro" id="IPR010851">
    <property type="entry name" value="DEFL"/>
</dbReference>
<dbReference type="PANTHER" id="PTHR33830:SF36">
    <property type="entry name" value="DEFENSIN-LIKE PROTEIN 155-RELATED"/>
    <property type="match status" value="1"/>
</dbReference>
<dbReference type="PANTHER" id="PTHR33830">
    <property type="entry name" value="DEFENSIN-LIKE PROTEIN 184-RELATED"/>
    <property type="match status" value="1"/>
</dbReference>
<dbReference type="Pfam" id="PF07333">
    <property type="entry name" value="SLR1-BP"/>
    <property type="match status" value="1"/>
</dbReference>
<protein>
    <recommendedName>
        <fullName>Defensin-like protein 156</fullName>
    </recommendedName>
    <alternativeName>
        <fullName>Low-molecular-weight cysteine-rich protein 21</fullName>
        <shortName>Protein LCR21</shortName>
    </alternativeName>
</protein>
<comment type="subcellular location">
    <subcellularLocation>
        <location evidence="1">Secreted</location>
    </subcellularLocation>
</comment>
<comment type="tissue specificity">
    <text evidence="4">Expressed in flower buds, but not in stems, roots or rosette leaves.</text>
</comment>
<comment type="similarity">
    <text evidence="5">Belongs to the DEFL family.</text>
</comment>
<sequence length="82" mass="9088">MAKISCSYFLVLMLVFSVFSLVEKTKGKRHCSTIILPESPCVPQDCVEYCFEEYNGGGTCIASKTGRTTNCMCTYNCHGNNL</sequence>
<gene>
    <name type="primary">LCR21</name>
    <name type="ordered locus">At4g29283</name>
    <name type="ORF">F17A13</name>
</gene>